<feature type="chain" id="PRO_1000019569" description="ATP-dependent dethiobiotin synthetase BioD">
    <location>
        <begin position="1"/>
        <end position="227"/>
    </location>
</feature>
<feature type="active site" evidence="1">
    <location>
        <position position="38"/>
    </location>
</feature>
<feature type="binding site" evidence="1">
    <location>
        <begin position="13"/>
        <end position="18"/>
    </location>
    <ligand>
        <name>ATP</name>
        <dbReference type="ChEBI" id="CHEBI:30616"/>
    </ligand>
</feature>
<feature type="binding site" evidence="1">
    <location>
        <position position="17"/>
    </location>
    <ligand>
        <name>Mg(2+)</name>
        <dbReference type="ChEBI" id="CHEBI:18420"/>
    </ligand>
</feature>
<feature type="binding site" evidence="1">
    <location>
        <position position="55"/>
    </location>
    <ligand>
        <name>ATP</name>
        <dbReference type="ChEBI" id="CHEBI:30616"/>
    </ligand>
</feature>
<feature type="binding site" evidence="1">
    <location>
        <position position="55"/>
    </location>
    <ligand>
        <name>Mg(2+)</name>
        <dbReference type="ChEBI" id="CHEBI:18420"/>
    </ligand>
</feature>
<feature type="binding site" evidence="1">
    <location>
        <begin position="116"/>
        <end position="119"/>
    </location>
    <ligand>
        <name>ATP</name>
        <dbReference type="ChEBI" id="CHEBI:30616"/>
    </ligand>
</feature>
<feature type="binding site" evidence="1">
    <location>
        <position position="116"/>
    </location>
    <ligand>
        <name>Mg(2+)</name>
        <dbReference type="ChEBI" id="CHEBI:18420"/>
    </ligand>
</feature>
<feature type="binding site" evidence="1">
    <location>
        <begin position="176"/>
        <end position="177"/>
    </location>
    <ligand>
        <name>ATP</name>
        <dbReference type="ChEBI" id="CHEBI:30616"/>
    </ligand>
</feature>
<feature type="binding site" evidence="1">
    <location>
        <begin position="205"/>
        <end position="207"/>
    </location>
    <ligand>
        <name>ATP</name>
        <dbReference type="ChEBI" id="CHEBI:30616"/>
    </ligand>
</feature>
<keyword id="KW-0067">ATP-binding</keyword>
<keyword id="KW-0093">Biotin biosynthesis</keyword>
<keyword id="KW-0963">Cytoplasm</keyword>
<keyword id="KW-0436">Ligase</keyword>
<keyword id="KW-0460">Magnesium</keyword>
<keyword id="KW-0479">Metal-binding</keyword>
<keyword id="KW-0547">Nucleotide-binding</keyword>
<protein>
    <recommendedName>
        <fullName evidence="1">ATP-dependent dethiobiotin synthetase BioD</fullName>
        <ecNumber evidence="1">6.3.3.3</ecNumber>
    </recommendedName>
    <alternativeName>
        <fullName evidence="1">DTB synthetase</fullName>
        <shortName evidence="1">DTBS</shortName>
    </alternativeName>
    <alternativeName>
        <fullName evidence="1">Dethiobiotin synthase</fullName>
    </alternativeName>
</protein>
<gene>
    <name evidence="1" type="primary">bioD</name>
    <name type="ordered locus">VIBHAR_01810</name>
</gene>
<comment type="function">
    <text evidence="1">Catalyzes a mechanistically unusual reaction, the ATP-dependent insertion of CO2 between the N7 and N8 nitrogen atoms of 7,8-diaminopelargonic acid (DAPA, also called 7,8-diammoniononanoate) to form a ureido ring.</text>
</comment>
<comment type="catalytic activity">
    <reaction evidence="1">
        <text>(7R,8S)-7,8-diammoniononanoate + CO2 + ATP = (4R,5S)-dethiobiotin + ADP + phosphate + 3 H(+)</text>
        <dbReference type="Rhea" id="RHEA:15805"/>
        <dbReference type="ChEBI" id="CHEBI:15378"/>
        <dbReference type="ChEBI" id="CHEBI:16526"/>
        <dbReference type="ChEBI" id="CHEBI:30616"/>
        <dbReference type="ChEBI" id="CHEBI:43474"/>
        <dbReference type="ChEBI" id="CHEBI:149469"/>
        <dbReference type="ChEBI" id="CHEBI:149473"/>
        <dbReference type="ChEBI" id="CHEBI:456216"/>
        <dbReference type="EC" id="6.3.3.3"/>
    </reaction>
</comment>
<comment type="cofactor">
    <cofactor evidence="1">
        <name>Mg(2+)</name>
        <dbReference type="ChEBI" id="CHEBI:18420"/>
    </cofactor>
</comment>
<comment type="pathway">
    <text evidence="1">Cofactor biosynthesis; biotin biosynthesis; biotin from 7,8-diaminononanoate: step 1/2.</text>
</comment>
<comment type="subunit">
    <text evidence="1">Homodimer.</text>
</comment>
<comment type="subcellular location">
    <subcellularLocation>
        <location evidence="1">Cytoplasm</location>
    </subcellularLocation>
</comment>
<comment type="similarity">
    <text evidence="1">Belongs to the dethiobiotin synthetase family.</text>
</comment>
<name>BIOD_VIBC1</name>
<dbReference type="EC" id="6.3.3.3" evidence="1"/>
<dbReference type="EMBL" id="CP000789">
    <property type="protein sequence ID" value="ABU70779.1"/>
    <property type="molecule type" value="Genomic_DNA"/>
</dbReference>
<dbReference type="RefSeq" id="WP_012127613.1">
    <property type="nucleotide sequence ID" value="NC_009783.1"/>
</dbReference>
<dbReference type="SMR" id="A7MX33"/>
<dbReference type="KEGG" id="vha:VIBHAR_01810"/>
<dbReference type="PATRIC" id="fig|338187.25.peg.865"/>
<dbReference type="UniPathway" id="UPA00078">
    <property type="reaction ID" value="UER00161"/>
</dbReference>
<dbReference type="Proteomes" id="UP000008152">
    <property type="component" value="Chromosome I"/>
</dbReference>
<dbReference type="GO" id="GO:0005829">
    <property type="term" value="C:cytosol"/>
    <property type="evidence" value="ECO:0007669"/>
    <property type="project" value="TreeGrafter"/>
</dbReference>
<dbReference type="GO" id="GO:0005524">
    <property type="term" value="F:ATP binding"/>
    <property type="evidence" value="ECO:0007669"/>
    <property type="project" value="UniProtKB-UniRule"/>
</dbReference>
<dbReference type="GO" id="GO:0004141">
    <property type="term" value="F:dethiobiotin synthase activity"/>
    <property type="evidence" value="ECO:0007669"/>
    <property type="project" value="UniProtKB-UniRule"/>
</dbReference>
<dbReference type="GO" id="GO:0000287">
    <property type="term" value="F:magnesium ion binding"/>
    <property type="evidence" value="ECO:0007669"/>
    <property type="project" value="UniProtKB-UniRule"/>
</dbReference>
<dbReference type="GO" id="GO:0009102">
    <property type="term" value="P:biotin biosynthetic process"/>
    <property type="evidence" value="ECO:0007669"/>
    <property type="project" value="UniProtKB-UniRule"/>
</dbReference>
<dbReference type="CDD" id="cd03109">
    <property type="entry name" value="DTBS"/>
    <property type="match status" value="1"/>
</dbReference>
<dbReference type="FunFam" id="3.40.50.300:FF:000292">
    <property type="entry name" value="ATP-dependent dethiobiotin synthetase BioD"/>
    <property type="match status" value="1"/>
</dbReference>
<dbReference type="Gene3D" id="3.40.50.300">
    <property type="entry name" value="P-loop containing nucleotide triphosphate hydrolases"/>
    <property type="match status" value="1"/>
</dbReference>
<dbReference type="HAMAP" id="MF_00336">
    <property type="entry name" value="BioD"/>
    <property type="match status" value="1"/>
</dbReference>
<dbReference type="InterPro" id="IPR004472">
    <property type="entry name" value="DTB_synth_BioD"/>
</dbReference>
<dbReference type="InterPro" id="IPR027417">
    <property type="entry name" value="P-loop_NTPase"/>
</dbReference>
<dbReference type="NCBIfam" id="TIGR00347">
    <property type="entry name" value="bioD"/>
    <property type="match status" value="1"/>
</dbReference>
<dbReference type="PANTHER" id="PTHR43210">
    <property type="entry name" value="DETHIOBIOTIN SYNTHETASE"/>
    <property type="match status" value="1"/>
</dbReference>
<dbReference type="PANTHER" id="PTHR43210:SF5">
    <property type="entry name" value="DETHIOBIOTIN SYNTHETASE"/>
    <property type="match status" value="1"/>
</dbReference>
<dbReference type="Pfam" id="PF13500">
    <property type="entry name" value="AAA_26"/>
    <property type="match status" value="1"/>
</dbReference>
<dbReference type="PIRSF" id="PIRSF006755">
    <property type="entry name" value="DTB_synth"/>
    <property type="match status" value="1"/>
</dbReference>
<dbReference type="SUPFAM" id="SSF52540">
    <property type="entry name" value="P-loop containing nucleoside triphosphate hydrolases"/>
    <property type="match status" value="1"/>
</dbReference>
<organism>
    <name type="scientific">Vibrio campbellii (strain ATCC BAA-1116)</name>
    <dbReference type="NCBI Taxonomy" id="2902295"/>
    <lineage>
        <taxon>Bacteria</taxon>
        <taxon>Pseudomonadati</taxon>
        <taxon>Pseudomonadota</taxon>
        <taxon>Gammaproteobacteria</taxon>
        <taxon>Vibrionales</taxon>
        <taxon>Vibrionaceae</taxon>
        <taxon>Vibrio</taxon>
    </lineage>
</organism>
<reference key="1">
    <citation type="submission" date="2007-08" db="EMBL/GenBank/DDBJ databases">
        <authorList>
            <consortium name="The Vibrio harveyi Genome Sequencing Project"/>
            <person name="Bassler B."/>
            <person name="Clifton S.W."/>
            <person name="Fulton L."/>
            <person name="Delehaunty K."/>
            <person name="Fronick C."/>
            <person name="Harrison M."/>
            <person name="Markivic C."/>
            <person name="Fulton R."/>
            <person name="Tin-Wollam A.-M."/>
            <person name="Shah N."/>
            <person name="Pepin K."/>
            <person name="Nash W."/>
            <person name="Thiruvilangam P."/>
            <person name="Bhonagiri V."/>
            <person name="Waters C."/>
            <person name="Tu K.C."/>
            <person name="Irgon J."/>
            <person name="Wilson R.K."/>
        </authorList>
    </citation>
    <scope>NUCLEOTIDE SEQUENCE [LARGE SCALE GENOMIC DNA]</scope>
    <source>
        <strain>ATCC BAA-1116 / BB120</strain>
    </source>
</reference>
<evidence type="ECO:0000255" key="1">
    <source>
        <dbReference type="HAMAP-Rule" id="MF_00336"/>
    </source>
</evidence>
<proteinExistence type="inferred from homology"/>
<sequence>MIDAFFIAGTDTDVGKTVASKAILQALGAKGLNTIGYKPVAAGSDKTAEGWRNSDALHLQKAATLDIAYDDVNPYALELPTSPHIAAKHEHVEIKYEVLSEKLAHHKEQSDIVLVEGAGGWRVPVSDTDSLSTWVQQEQLPVVLVVGIKLGCLSHALLTAEIIKADGLNLVGWVANRVNPGTEHYAEIIDMLEDRLDAPKLGEIPYIPSAKRKDLGKFINVEPLLNA</sequence>
<accession>A7MX33</accession>